<comment type="function">
    <text evidence="1 2">Catalyzes the ATP-dependent amination of UTP to CTP with either L-glutamine or ammonia as the source of nitrogen (PubMed:8138139). Regulates intracellular CTP levels through interactions with the four ribonucleotide triphosphates (By similarity).</text>
</comment>
<comment type="catalytic activity">
    <reaction evidence="1">
        <text>UTP + L-glutamine + ATP + H2O = CTP + L-glutamate + ADP + phosphate + 2 H(+)</text>
        <dbReference type="Rhea" id="RHEA:26426"/>
        <dbReference type="ChEBI" id="CHEBI:15377"/>
        <dbReference type="ChEBI" id="CHEBI:15378"/>
        <dbReference type="ChEBI" id="CHEBI:29985"/>
        <dbReference type="ChEBI" id="CHEBI:30616"/>
        <dbReference type="ChEBI" id="CHEBI:37563"/>
        <dbReference type="ChEBI" id="CHEBI:43474"/>
        <dbReference type="ChEBI" id="CHEBI:46398"/>
        <dbReference type="ChEBI" id="CHEBI:58359"/>
        <dbReference type="ChEBI" id="CHEBI:456216"/>
        <dbReference type="EC" id="6.3.4.2"/>
    </reaction>
</comment>
<comment type="catalytic activity">
    <reaction evidence="1">
        <text>L-glutamine + H2O = L-glutamate + NH4(+)</text>
        <dbReference type="Rhea" id="RHEA:15889"/>
        <dbReference type="ChEBI" id="CHEBI:15377"/>
        <dbReference type="ChEBI" id="CHEBI:28938"/>
        <dbReference type="ChEBI" id="CHEBI:29985"/>
        <dbReference type="ChEBI" id="CHEBI:58359"/>
    </reaction>
</comment>
<comment type="catalytic activity">
    <reaction evidence="1">
        <text>UTP + NH4(+) + ATP = CTP + ADP + phosphate + 2 H(+)</text>
        <dbReference type="Rhea" id="RHEA:16597"/>
        <dbReference type="ChEBI" id="CHEBI:15378"/>
        <dbReference type="ChEBI" id="CHEBI:28938"/>
        <dbReference type="ChEBI" id="CHEBI:30616"/>
        <dbReference type="ChEBI" id="CHEBI:37563"/>
        <dbReference type="ChEBI" id="CHEBI:43474"/>
        <dbReference type="ChEBI" id="CHEBI:46398"/>
        <dbReference type="ChEBI" id="CHEBI:456216"/>
    </reaction>
</comment>
<comment type="activity regulation">
    <text evidence="1">Allosterically activated by GTP, when glutamine is the substrate; GTP has no effect on the reaction when ammonia is the substrate. The allosteric effector GTP functions by stabilizing the protein conformation that binds the tetrahedral intermediate(s) formed during glutamine hydrolysis. Inhibited by the product CTP, via allosteric rather than competitive inhibition.</text>
</comment>
<comment type="pathway">
    <text evidence="1">Pyrimidine metabolism; CTP biosynthesis via de novo pathway; CTP from UDP: step 2/2.</text>
</comment>
<comment type="subunit">
    <text evidence="1">Homotetramer.</text>
</comment>
<comment type="miscellaneous">
    <text evidence="1">CTPSs have evolved a hybrid strategy for distinguishing between UTP and CTP. The overlapping regions of the product feedback inhibitory and substrate sites recognize a common feature in both compounds, the triphosphate moiety. To differentiate isosteric substrate and product pyrimidine rings, an additional pocket far from the expected kinase/ligase catalytic site, specifically recognizes the cytosine and ribose portions of the product inhibitor.</text>
</comment>
<comment type="similarity">
    <text evidence="1">Belongs to the CTP synthase family.</text>
</comment>
<accession>P28595</accession>
<protein>
    <recommendedName>
        <fullName evidence="1">CTP synthase</fullName>
        <ecNumber evidence="1">6.3.4.2</ecNumber>
    </recommendedName>
    <alternativeName>
        <fullName evidence="1">Cytidine 5'-triphosphate synthase</fullName>
    </alternativeName>
    <alternativeName>
        <fullName evidence="1">Cytidine triphosphate synthetase</fullName>
        <shortName evidence="1">CTP synthetase</shortName>
        <shortName evidence="1">CTPS</shortName>
    </alternativeName>
    <alternativeName>
        <fullName evidence="1">UTP--ammonia ligase</fullName>
    </alternativeName>
</protein>
<organism>
    <name type="scientific">Azospirillum brasilense</name>
    <dbReference type="NCBI Taxonomy" id="192"/>
    <lineage>
        <taxon>Bacteria</taxon>
        <taxon>Pseudomonadati</taxon>
        <taxon>Pseudomonadota</taxon>
        <taxon>Alphaproteobacteria</taxon>
        <taxon>Rhodospirillales</taxon>
        <taxon>Azospirillaceae</taxon>
        <taxon>Azospirillum</taxon>
    </lineage>
</organism>
<keyword id="KW-0067">ATP-binding</keyword>
<keyword id="KW-0315">Glutamine amidotransferase</keyword>
<keyword id="KW-0436">Ligase</keyword>
<keyword id="KW-0460">Magnesium</keyword>
<keyword id="KW-0479">Metal-binding</keyword>
<keyword id="KW-0547">Nucleotide-binding</keyword>
<keyword id="KW-0665">Pyrimidine biosynthesis</keyword>
<evidence type="ECO:0000255" key="1">
    <source>
        <dbReference type="HAMAP-Rule" id="MF_01227"/>
    </source>
</evidence>
<evidence type="ECO:0000305" key="2">
    <source>
    </source>
</evidence>
<sequence length="544" mass="59908">MTRYIFITGGVVSSLGKGLASAALGALLQARGYKVRLAKLDPYLNVDPGTMSPYQHGEVYVTDDGAETDLDLGHYERFTGVAARRGDNITTGRIYSNVIAKERRGDYLGATVQVIPHVTDQIKDFIGAETTDEDFILCEIGGTVGDIESTPFLEAIRQFGNEVGPENALFIHLTLLPYIPTAGELKTKPTQHSVKELLGMGIQANILLCRADRPIPENERKKIALFCNIRPERVIAALDVDSIYQVPVSYHEEGFDTQVLAYFGLPTEGKPDLSRWTSIVERVRKPQGEVTIAVVGKYTSLLDSYKSLAEALTHGGIANNVKVKLDWIDSEIFEDESAVQRLENVHGILVPGGFGSRGTEGKIRAAQFARERKVPYFGICFGMQMAVIESARNMAGIVDAGSTELGKPGNPVVGLLGLMTEWMRGNSLEKRTEGTDVGGTMRLGTYPAKLVPGSKVAEVYGTTDITERHRHRYEVNVYYKDRLEKVGLLFSGLSPTQLPEIVEIPDHPWFIGVQFHPELKSKPFDPHPLFTSFIKAAIEQSRLV</sequence>
<dbReference type="EC" id="6.3.4.2" evidence="1"/>
<dbReference type="EMBL" id="X67216">
    <property type="protein sequence ID" value="CAA47656.1"/>
    <property type="molecule type" value="Genomic_DNA"/>
</dbReference>
<dbReference type="PIR" id="I39496">
    <property type="entry name" value="S25101"/>
</dbReference>
<dbReference type="SMR" id="P28595"/>
<dbReference type="UniPathway" id="UPA00159">
    <property type="reaction ID" value="UER00277"/>
</dbReference>
<dbReference type="GO" id="GO:0005829">
    <property type="term" value="C:cytosol"/>
    <property type="evidence" value="ECO:0007669"/>
    <property type="project" value="TreeGrafter"/>
</dbReference>
<dbReference type="GO" id="GO:0005524">
    <property type="term" value="F:ATP binding"/>
    <property type="evidence" value="ECO:0007669"/>
    <property type="project" value="UniProtKB-KW"/>
</dbReference>
<dbReference type="GO" id="GO:0003883">
    <property type="term" value="F:CTP synthase activity"/>
    <property type="evidence" value="ECO:0007669"/>
    <property type="project" value="UniProtKB-UniRule"/>
</dbReference>
<dbReference type="GO" id="GO:0004359">
    <property type="term" value="F:glutaminase activity"/>
    <property type="evidence" value="ECO:0007669"/>
    <property type="project" value="RHEA"/>
</dbReference>
<dbReference type="GO" id="GO:0042802">
    <property type="term" value="F:identical protein binding"/>
    <property type="evidence" value="ECO:0007669"/>
    <property type="project" value="TreeGrafter"/>
</dbReference>
<dbReference type="GO" id="GO:0046872">
    <property type="term" value="F:metal ion binding"/>
    <property type="evidence" value="ECO:0007669"/>
    <property type="project" value="UniProtKB-KW"/>
</dbReference>
<dbReference type="GO" id="GO:0044210">
    <property type="term" value="P:'de novo' CTP biosynthetic process"/>
    <property type="evidence" value="ECO:0007669"/>
    <property type="project" value="UniProtKB-UniRule"/>
</dbReference>
<dbReference type="GO" id="GO:0019856">
    <property type="term" value="P:pyrimidine nucleobase biosynthetic process"/>
    <property type="evidence" value="ECO:0007669"/>
    <property type="project" value="TreeGrafter"/>
</dbReference>
<dbReference type="CDD" id="cd03113">
    <property type="entry name" value="CTPS_N"/>
    <property type="match status" value="1"/>
</dbReference>
<dbReference type="CDD" id="cd01746">
    <property type="entry name" value="GATase1_CTP_Synthase"/>
    <property type="match status" value="1"/>
</dbReference>
<dbReference type="FunFam" id="3.40.50.300:FF:000009">
    <property type="entry name" value="CTP synthase"/>
    <property type="match status" value="1"/>
</dbReference>
<dbReference type="FunFam" id="3.40.50.880:FF:000002">
    <property type="entry name" value="CTP synthase"/>
    <property type="match status" value="1"/>
</dbReference>
<dbReference type="Gene3D" id="3.40.50.880">
    <property type="match status" value="1"/>
</dbReference>
<dbReference type="Gene3D" id="3.40.50.300">
    <property type="entry name" value="P-loop containing nucleotide triphosphate hydrolases"/>
    <property type="match status" value="1"/>
</dbReference>
<dbReference type="HAMAP" id="MF_01227">
    <property type="entry name" value="PyrG"/>
    <property type="match status" value="1"/>
</dbReference>
<dbReference type="InterPro" id="IPR029062">
    <property type="entry name" value="Class_I_gatase-like"/>
</dbReference>
<dbReference type="InterPro" id="IPR004468">
    <property type="entry name" value="CTP_synthase"/>
</dbReference>
<dbReference type="InterPro" id="IPR017456">
    <property type="entry name" value="CTP_synthase_N"/>
</dbReference>
<dbReference type="InterPro" id="IPR017926">
    <property type="entry name" value="GATASE"/>
</dbReference>
<dbReference type="InterPro" id="IPR033828">
    <property type="entry name" value="GATase1_CTP_Synthase"/>
</dbReference>
<dbReference type="InterPro" id="IPR027417">
    <property type="entry name" value="P-loop_NTPase"/>
</dbReference>
<dbReference type="NCBIfam" id="NF003792">
    <property type="entry name" value="PRK05380.1"/>
    <property type="match status" value="1"/>
</dbReference>
<dbReference type="NCBIfam" id="TIGR00337">
    <property type="entry name" value="PyrG"/>
    <property type="match status" value="1"/>
</dbReference>
<dbReference type="PANTHER" id="PTHR11550">
    <property type="entry name" value="CTP SYNTHASE"/>
    <property type="match status" value="1"/>
</dbReference>
<dbReference type="PANTHER" id="PTHR11550:SF0">
    <property type="entry name" value="CTP SYNTHASE-RELATED"/>
    <property type="match status" value="1"/>
</dbReference>
<dbReference type="Pfam" id="PF06418">
    <property type="entry name" value="CTP_synth_N"/>
    <property type="match status" value="1"/>
</dbReference>
<dbReference type="Pfam" id="PF00117">
    <property type="entry name" value="GATase"/>
    <property type="match status" value="1"/>
</dbReference>
<dbReference type="SUPFAM" id="SSF52317">
    <property type="entry name" value="Class I glutamine amidotransferase-like"/>
    <property type="match status" value="1"/>
</dbReference>
<dbReference type="SUPFAM" id="SSF52540">
    <property type="entry name" value="P-loop containing nucleoside triphosphate hydrolases"/>
    <property type="match status" value="1"/>
</dbReference>
<dbReference type="PROSITE" id="PS51273">
    <property type="entry name" value="GATASE_TYPE_1"/>
    <property type="match status" value="1"/>
</dbReference>
<name>PYRG_AZOBR</name>
<proteinExistence type="inferred from homology"/>
<reference key="1">
    <citation type="journal article" date="1994" name="FEMS Microbiol. Lett.">
        <title>Identification and sequencing of pyrG, the CTP synthetase gene of Azospirillum brasilense Sp7.</title>
        <authorList>
            <person name="Zimmer W."/>
            <person name="Hundeshagen B."/>
        </authorList>
    </citation>
    <scope>NUCLEOTIDE SEQUENCE [GENOMIC DNA]</scope>
    <scope>FUNCTION</scope>
    <source>
        <strain>ATCC 29145 / DSM 1690 / IMET 11303 / Sp7</strain>
    </source>
</reference>
<feature type="chain" id="PRO_0000138161" description="CTP synthase">
    <location>
        <begin position="1"/>
        <end position="544"/>
    </location>
</feature>
<feature type="domain" description="Glutamine amidotransferase type-1" evidence="1">
    <location>
        <begin position="291"/>
        <end position="543"/>
    </location>
</feature>
<feature type="region of interest" description="Amidoligase domain" evidence="1">
    <location>
        <begin position="1"/>
        <end position="265"/>
    </location>
</feature>
<feature type="active site" description="Nucleophile; for glutamine hydrolysis" evidence="1">
    <location>
        <position position="380"/>
    </location>
</feature>
<feature type="active site" evidence="1">
    <location>
        <position position="516"/>
    </location>
</feature>
<feature type="active site" evidence="1">
    <location>
        <position position="518"/>
    </location>
</feature>
<feature type="binding site" evidence="1">
    <location>
        <position position="13"/>
    </location>
    <ligand>
        <name>CTP</name>
        <dbReference type="ChEBI" id="CHEBI:37563"/>
        <note>allosteric inhibitor</note>
    </ligand>
</feature>
<feature type="binding site" evidence="1">
    <location>
        <position position="13"/>
    </location>
    <ligand>
        <name>UTP</name>
        <dbReference type="ChEBI" id="CHEBI:46398"/>
    </ligand>
</feature>
<feature type="binding site" evidence="1">
    <location>
        <begin position="14"/>
        <end position="19"/>
    </location>
    <ligand>
        <name>ATP</name>
        <dbReference type="ChEBI" id="CHEBI:30616"/>
    </ligand>
</feature>
<feature type="binding site" evidence="1">
    <location>
        <position position="54"/>
    </location>
    <ligand>
        <name>L-glutamine</name>
        <dbReference type="ChEBI" id="CHEBI:58359"/>
    </ligand>
</feature>
<feature type="binding site" evidence="1">
    <location>
        <position position="71"/>
    </location>
    <ligand>
        <name>ATP</name>
        <dbReference type="ChEBI" id="CHEBI:30616"/>
    </ligand>
</feature>
<feature type="binding site" evidence="1">
    <location>
        <position position="71"/>
    </location>
    <ligand>
        <name>Mg(2+)</name>
        <dbReference type="ChEBI" id="CHEBI:18420"/>
    </ligand>
</feature>
<feature type="binding site" evidence="1">
    <location>
        <position position="139"/>
    </location>
    <ligand>
        <name>Mg(2+)</name>
        <dbReference type="ChEBI" id="CHEBI:18420"/>
    </ligand>
</feature>
<feature type="binding site" evidence="1">
    <location>
        <begin position="146"/>
        <end position="148"/>
    </location>
    <ligand>
        <name>CTP</name>
        <dbReference type="ChEBI" id="CHEBI:37563"/>
        <note>allosteric inhibitor</note>
    </ligand>
</feature>
<feature type="binding site" evidence="1">
    <location>
        <begin position="186"/>
        <end position="191"/>
    </location>
    <ligand>
        <name>CTP</name>
        <dbReference type="ChEBI" id="CHEBI:37563"/>
        <note>allosteric inhibitor</note>
    </ligand>
</feature>
<feature type="binding site" evidence="1">
    <location>
        <begin position="186"/>
        <end position="191"/>
    </location>
    <ligand>
        <name>UTP</name>
        <dbReference type="ChEBI" id="CHEBI:46398"/>
    </ligand>
</feature>
<feature type="binding site" evidence="1">
    <location>
        <position position="222"/>
    </location>
    <ligand>
        <name>CTP</name>
        <dbReference type="ChEBI" id="CHEBI:37563"/>
        <note>allosteric inhibitor</note>
    </ligand>
</feature>
<feature type="binding site" evidence="1">
    <location>
        <position position="222"/>
    </location>
    <ligand>
        <name>UTP</name>
        <dbReference type="ChEBI" id="CHEBI:46398"/>
    </ligand>
</feature>
<feature type="binding site" evidence="1">
    <location>
        <position position="240"/>
    </location>
    <ligand>
        <name>ATP</name>
        <dbReference type="ChEBI" id="CHEBI:30616"/>
    </ligand>
</feature>
<feature type="binding site" evidence="1">
    <location>
        <position position="353"/>
    </location>
    <ligand>
        <name>L-glutamine</name>
        <dbReference type="ChEBI" id="CHEBI:58359"/>
    </ligand>
</feature>
<feature type="binding site" evidence="1">
    <location>
        <begin position="381"/>
        <end position="384"/>
    </location>
    <ligand>
        <name>L-glutamine</name>
        <dbReference type="ChEBI" id="CHEBI:58359"/>
    </ligand>
</feature>
<feature type="binding site" evidence="1">
    <location>
        <position position="404"/>
    </location>
    <ligand>
        <name>L-glutamine</name>
        <dbReference type="ChEBI" id="CHEBI:58359"/>
    </ligand>
</feature>
<feature type="binding site" evidence="1">
    <location>
        <position position="472"/>
    </location>
    <ligand>
        <name>L-glutamine</name>
        <dbReference type="ChEBI" id="CHEBI:58359"/>
    </ligand>
</feature>
<gene>
    <name evidence="1 2" type="primary">pyrG</name>
</gene>